<evidence type="ECO:0000250" key="1">
    <source>
        <dbReference type="UniProtKB" id="P21852"/>
    </source>
</evidence>
<evidence type="ECO:0000269" key="2">
    <source>
    </source>
</evidence>
<evidence type="ECO:0000269" key="3">
    <source>
    </source>
</evidence>
<evidence type="ECO:0000303" key="4">
    <source>
    </source>
</evidence>
<evidence type="ECO:0000305" key="5"/>
<evidence type="ECO:0000305" key="6">
    <source>
    </source>
</evidence>
<evidence type="ECO:0000305" key="7">
    <source>
    </source>
</evidence>
<evidence type="ECO:0000312" key="8">
    <source>
        <dbReference type="EMBL" id="AAM31866.1"/>
    </source>
</evidence>
<feature type="chain" id="PRO_0000459030" description="F420 non-reducing hydrogenase II large subunit">
    <location>
        <begin position="1"/>
        <end position="591"/>
    </location>
</feature>
<feature type="binding site" evidence="1">
    <location>
        <position position="42"/>
    </location>
    <ligand>
        <name>Mg(2+)</name>
        <dbReference type="ChEBI" id="CHEBI:18420"/>
    </ligand>
</feature>
<feature type="binding site" evidence="1">
    <location>
        <position position="61"/>
    </location>
    <ligand>
        <name>Ni(2+)</name>
        <dbReference type="ChEBI" id="CHEBI:49786"/>
    </ligand>
</feature>
<feature type="binding site" evidence="1">
    <location>
        <position position="64"/>
    </location>
    <ligand>
        <name>Fe cation</name>
        <dbReference type="ChEBI" id="CHEBI:24875"/>
    </ligand>
</feature>
<feature type="binding site" evidence="1">
    <location>
        <position position="64"/>
    </location>
    <ligand>
        <name>Ni(2+)</name>
        <dbReference type="ChEBI" id="CHEBI:49786"/>
    </ligand>
</feature>
<feature type="binding site" evidence="1">
    <location>
        <position position="569"/>
    </location>
    <ligand>
        <name>Ni(2+)</name>
        <dbReference type="ChEBI" id="CHEBI:49786"/>
    </ligand>
</feature>
<feature type="binding site" evidence="1">
    <location>
        <position position="572"/>
    </location>
    <ligand>
        <name>Fe cation</name>
        <dbReference type="ChEBI" id="CHEBI:24875"/>
    </ligand>
</feature>
<feature type="binding site" evidence="1">
    <location>
        <position position="572"/>
    </location>
    <ligand>
        <name>Ni(2+)</name>
        <dbReference type="ChEBI" id="CHEBI:49786"/>
    </ligand>
</feature>
<feature type="binding site" evidence="1">
    <location>
        <position position="575"/>
    </location>
    <ligand>
        <name>Mg(2+)</name>
        <dbReference type="ChEBI" id="CHEBI:18420"/>
    </ligand>
</feature>
<dbReference type="EC" id="1.12.98.3" evidence="6"/>
<dbReference type="EMBL" id="X83112">
    <property type="status" value="NOT_ANNOTATED_CDS"/>
    <property type="molecule type" value="Genomic_DNA"/>
</dbReference>
<dbReference type="EMBL" id="AE008384">
    <property type="protein sequence ID" value="AAM31866.1"/>
    <property type="molecule type" value="Genomic_DNA"/>
</dbReference>
<dbReference type="PIR" id="S67478">
    <property type="entry name" value="S67478"/>
</dbReference>
<dbReference type="RefSeq" id="WP_011034101.1">
    <property type="nucleotide sequence ID" value="NC_003901.1"/>
</dbReference>
<dbReference type="SMR" id="F1SVF8"/>
<dbReference type="KEGG" id="mma:MM_2170"/>
<dbReference type="PATRIC" id="fig|192952.21.peg.2486"/>
<dbReference type="eggNOG" id="arCOG01550">
    <property type="taxonomic scope" value="Archaea"/>
</dbReference>
<dbReference type="HOGENOM" id="CLU_030087_0_0_2"/>
<dbReference type="Proteomes" id="UP000000595">
    <property type="component" value="Chromosome"/>
</dbReference>
<dbReference type="GO" id="GO:0005886">
    <property type="term" value="C:plasma membrane"/>
    <property type="evidence" value="ECO:0007669"/>
    <property type="project" value="UniProtKB-SubCell"/>
</dbReference>
<dbReference type="GO" id="GO:0008901">
    <property type="term" value="F:ferredoxin hydrogenase activity"/>
    <property type="evidence" value="ECO:0007669"/>
    <property type="project" value="InterPro"/>
</dbReference>
<dbReference type="GO" id="GO:0051911">
    <property type="term" value="F:Methanosarcina-phenazine hydrogenase activity"/>
    <property type="evidence" value="ECO:0007669"/>
    <property type="project" value="RHEA"/>
</dbReference>
<dbReference type="GO" id="GO:0016151">
    <property type="term" value="F:nickel cation binding"/>
    <property type="evidence" value="ECO:0007669"/>
    <property type="project" value="InterPro"/>
</dbReference>
<dbReference type="GO" id="GO:0015948">
    <property type="term" value="P:methanogenesis"/>
    <property type="evidence" value="ECO:0007669"/>
    <property type="project" value="UniProtKB-KW"/>
</dbReference>
<dbReference type="Gene3D" id="1.10.645.10">
    <property type="entry name" value="Cytochrome-c3 Hydrogenase, chain B"/>
    <property type="match status" value="1"/>
</dbReference>
<dbReference type="InterPro" id="IPR001501">
    <property type="entry name" value="Ni-dep_hyd_lsu"/>
</dbReference>
<dbReference type="InterPro" id="IPR018194">
    <property type="entry name" value="Ni-dep_hyd_lsu_Ni_BS"/>
</dbReference>
<dbReference type="InterPro" id="IPR029014">
    <property type="entry name" value="NiFe-Hase_large"/>
</dbReference>
<dbReference type="InterPro" id="IPR050867">
    <property type="entry name" value="NiFe/NiFeSe_hydrgnase_LSU"/>
</dbReference>
<dbReference type="PANTHER" id="PTHR42958:SF4">
    <property type="entry name" value="HYDROGENASE EXPRESSION_FORMATION PROTEIN HUPK"/>
    <property type="match status" value="1"/>
</dbReference>
<dbReference type="PANTHER" id="PTHR42958">
    <property type="entry name" value="HYDROGENASE-2 LARGE CHAIN"/>
    <property type="match status" value="1"/>
</dbReference>
<dbReference type="Pfam" id="PF00374">
    <property type="entry name" value="NiFeSe_Hases"/>
    <property type="match status" value="2"/>
</dbReference>
<dbReference type="SUPFAM" id="SSF56762">
    <property type="entry name" value="HydB/Nqo4-like"/>
    <property type="match status" value="1"/>
</dbReference>
<dbReference type="PROSITE" id="PS00507">
    <property type="entry name" value="NI_HGENASE_L_1"/>
    <property type="match status" value="1"/>
</dbReference>
<dbReference type="PROSITE" id="PS00508">
    <property type="entry name" value="NI_HGENASE_L_2"/>
    <property type="match status" value="1"/>
</dbReference>
<organism>
    <name type="scientific">Methanosarcina mazei (strain ATCC BAA-159 / DSM 3647 / Goe1 / Go1 / JCM 11833 / OCM 88)</name>
    <name type="common">Methanosarcina frisia</name>
    <dbReference type="NCBI Taxonomy" id="192952"/>
    <lineage>
        <taxon>Archaea</taxon>
        <taxon>Methanobacteriati</taxon>
        <taxon>Methanobacteriota</taxon>
        <taxon>Stenosarchaea group</taxon>
        <taxon>Methanomicrobia</taxon>
        <taxon>Methanosarcinales</taxon>
        <taxon>Methanosarcinaceae</taxon>
        <taxon>Methanosarcina</taxon>
    </lineage>
</organism>
<protein>
    <recommendedName>
        <fullName evidence="5">F420 non-reducing hydrogenase II large subunit</fullName>
        <ecNumber evidence="6">1.12.98.3</ecNumber>
    </recommendedName>
    <alternativeName>
        <fullName evidence="5">F420-nonreactive hydrogenase II large subunit</fullName>
    </alternativeName>
    <alternativeName>
        <fullName evidence="5">Methanosarcina-phenazine hydrogenase II large subunit</fullName>
    </alternativeName>
</protein>
<proteinExistence type="evidence at transcript level"/>
<reference key="1">
    <citation type="journal article" date="1995" name="Eur. J. Biochem.">
        <title>Analysis of the vhoGAC and vhtGAC operons from Methanosarcina mazei strain Go1, both encoding a membrane-bound hydrogenase and a cytochrome b.</title>
        <authorList>
            <person name="Deppenmeier U."/>
            <person name="Blaut M."/>
            <person name="Lentes S."/>
            <person name="Herzberg C."/>
            <person name="Gottschalk G."/>
        </authorList>
    </citation>
    <scope>NUCLEOTIDE SEQUENCE [GENOMIC DNA]</scope>
    <scope>INDUCTION</scope>
    <source>
        <strain>ATCC BAA-159 / DSM 3647 / Goe1 / Go1 / JCM 11833 / OCM 88</strain>
    </source>
</reference>
<reference key="2">
    <citation type="journal article" date="2002" name="J. Mol. Microbiol. Biotechnol.">
        <title>The genome of Methanosarcina mazei: evidence for lateral gene transfer between Bacteria and Archaea.</title>
        <authorList>
            <person name="Deppenmeier U."/>
            <person name="Johann A."/>
            <person name="Hartsch T."/>
            <person name="Merkl R."/>
            <person name="Schmitz R.A."/>
            <person name="Martinez-Arias R."/>
            <person name="Henne A."/>
            <person name="Wiezer A."/>
            <person name="Baeumer S."/>
            <person name="Jacobi C."/>
            <person name="Brueggemann H."/>
            <person name="Lienard T."/>
            <person name="Christmann A."/>
            <person name="Boemecke M."/>
            <person name="Steckel S."/>
            <person name="Bhattacharyya A."/>
            <person name="Lykidis A."/>
            <person name="Overbeek R."/>
            <person name="Klenk H.-P."/>
            <person name="Gunsalus R.P."/>
            <person name="Fritz H.-J."/>
            <person name="Gottschalk G."/>
        </authorList>
    </citation>
    <scope>NUCLEOTIDE SEQUENCE [LARGE SCALE GENOMIC DNA]</scope>
    <source>
        <strain>ATCC BAA-159 / DSM 3647 / Goe1 / Go1 / JCM 11833 / OCM 88</strain>
    </source>
</reference>
<reference key="3">
    <citation type="journal article" date="2014" name="Biochim. Biophys. Acta">
        <title>Bioenergetics and anaerobic respiratory chains of aceticlastic methanogens.</title>
        <authorList>
            <person name="Welte C."/>
            <person name="Deppenmeier U."/>
        </authorList>
    </citation>
    <scope>PROBABLE FUNCTION</scope>
    <scope>REVIEW</scope>
</reference>
<gene>
    <name evidence="4" type="primary">vhtA</name>
    <name evidence="8" type="ordered locus">MM_2170</name>
</gene>
<name>VHTA_METMA</name>
<sequence>MVNVTVDPLTRIEGHQRISTEVDANGVITDAQSSSLIFRGFERILQHQDPRDAAFLTQRICGVCPLSHGLTATNALDELYGVAEHVPKDALVMRNIFQGLNMVASHATHIYVLFGPDLANPAYKKVLTPLGDTGSAVWDEMLGRFAPISYKMDGAAIPAGSSYMAAIPEKKRLQEMIALIAGRMPGPSSLYPGGYTYPATVADITKLSTYYLQVMDFVSAHTLKVDFNTWIENTYKASSPTKAVNFVTEHLTDLINKSTSSNDFSKEAGWGDVEFYAAFGSELVGEKLLGLPASLKHDTIGGYQDPSKICFVAYGGYYKPTDGYDPRSPAGDRIFTSGVVSGNLEYLKFDPDKITESTAHSFYQNSVNDLPPVKGETVPFTDPEKIVYTGGSDSQYSWDKAPRYDGIAGEVGPLARMLNIKEPLVTGLALALAENGYSPANVYTRMLARMQETAILAYELLNWVTVDYEPGGKISVPLDFNAAKDSQGMGLWEAPRGALGHWISTNGSGKVANYQCIVPGSWLMSPRDSNGIPGPLEQSLIGSKINPVGEVDYTNPVGIFHMGRSYDPCISCAVHTIDLTGKCAPNTLRIL</sequence>
<keyword id="KW-1003">Cell membrane</keyword>
<keyword id="KW-0408">Iron</keyword>
<keyword id="KW-0460">Magnesium</keyword>
<keyword id="KW-0472">Membrane</keyword>
<keyword id="KW-0479">Metal-binding</keyword>
<keyword id="KW-0484">Methanogenesis</keyword>
<keyword id="KW-0533">Nickel</keyword>
<keyword id="KW-0560">Oxidoreductase</keyword>
<comment type="function">
    <text evidence="2">Part of the F420 non-reducing hydrogenase II complex that catalyzes the reduction of methanophenazine to dihydromethanophenazine.</text>
</comment>
<comment type="catalytic activity">
    <reaction evidence="6">
        <text>methanophenazine + H2 = dihydromethanophenazine</text>
        <dbReference type="Rhea" id="RHEA:24436"/>
        <dbReference type="ChEBI" id="CHEBI:18276"/>
        <dbReference type="ChEBI" id="CHEBI:29118"/>
        <dbReference type="ChEBI" id="CHEBI:50375"/>
        <dbReference type="EC" id="1.12.98.3"/>
    </reaction>
</comment>
<comment type="cofactor">
    <cofactor evidence="1">
        <name>Ni(2+)</name>
        <dbReference type="ChEBI" id="CHEBI:49786"/>
    </cofactor>
</comment>
<comment type="cofactor">
    <cofactor evidence="1">
        <name>Fe cation</name>
        <dbReference type="ChEBI" id="CHEBI:24875"/>
    </cofactor>
</comment>
<comment type="subunit">
    <text evidence="6 7">Composed of a large subunit (VhtA), a small subunit (VhtG) and a cytochrome subunit (VhtC).</text>
</comment>
<comment type="subcellular location">
    <subcellularLocation>
        <location evidence="6">Cell membrane</location>
        <topology evidence="6">Peripheral membrane protein</topology>
    </subcellularLocation>
    <text evidence="5 6">Likely localized in the pseudo-periplasm (Probable). Is probably cotranslocated with the small subunit across the cytoplasmic membrane (Probable).</text>
</comment>
<comment type="induction">
    <text evidence="3">Expressed in methanol-grown cells.</text>
</comment>
<comment type="similarity">
    <text evidence="5">Belongs to the [NiFe]/[NiFeSe] hydrogenase large subunit family.</text>
</comment>
<accession>F1SVF8</accession>